<comment type="function">
    <text evidence="1">Catalyzes the N-acylation of UDP-3-O-acylglucosamine using 3-hydroxyacyl-ACP as the acyl donor. Is involved in the biosynthesis of lipid A, a phosphorylated glycolipid that anchors the lipopolysaccharide to the outer membrane of the cell.</text>
</comment>
<comment type="catalytic activity">
    <reaction evidence="1">
        <text>a UDP-3-O-[(3R)-3-hydroxyacyl]-alpha-D-glucosamine + a (3R)-hydroxyacyl-[ACP] = a UDP-2-N,3-O-bis[(3R)-3-hydroxyacyl]-alpha-D-glucosamine + holo-[ACP] + H(+)</text>
        <dbReference type="Rhea" id="RHEA:53836"/>
        <dbReference type="Rhea" id="RHEA-COMP:9685"/>
        <dbReference type="Rhea" id="RHEA-COMP:9945"/>
        <dbReference type="ChEBI" id="CHEBI:15378"/>
        <dbReference type="ChEBI" id="CHEBI:64479"/>
        <dbReference type="ChEBI" id="CHEBI:78827"/>
        <dbReference type="ChEBI" id="CHEBI:137740"/>
        <dbReference type="ChEBI" id="CHEBI:137748"/>
        <dbReference type="EC" id="2.3.1.191"/>
    </reaction>
</comment>
<comment type="pathway">
    <text evidence="1">Bacterial outer membrane biogenesis; LPS lipid A biosynthesis.</text>
</comment>
<comment type="subunit">
    <text evidence="1">Homotrimer.</text>
</comment>
<comment type="similarity">
    <text evidence="1">Belongs to the transferase hexapeptide repeat family. LpxD subfamily.</text>
</comment>
<reference key="1">
    <citation type="journal article" date="1999" name="Microbiology">
        <title>Use of primate model system to identify Chlamydia trachomatis protein antigens recognized uniquely in the context of infection.</title>
        <authorList>
            <person name="Bannantine J.P."/>
            <person name="Rockey D.D."/>
        </authorList>
    </citation>
    <scope>NUCLEOTIDE SEQUENCE [GENOMIC DNA]</scope>
</reference>
<reference key="2">
    <citation type="journal article" date="2008" name="Genome Res.">
        <title>Chlamydia trachomatis: genome sequence analysis of lymphogranuloma venereum isolates.</title>
        <authorList>
            <person name="Thomson N.R."/>
            <person name="Holden M.T.G."/>
            <person name="Carder C."/>
            <person name="Lennard N."/>
            <person name="Lockey S.J."/>
            <person name="Marsh P."/>
            <person name="Skipp P."/>
            <person name="O'Connor C.D."/>
            <person name="Goodhead I."/>
            <person name="Norbertzcak H."/>
            <person name="Harris B."/>
            <person name="Ormond D."/>
            <person name="Rance R."/>
            <person name="Quail M.A."/>
            <person name="Parkhill J."/>
            <person name="Stephens R.S."/>
            <person name="Clarke I.N."/>
        </authorList>
    </citation>
    <scope>NUCLEOTIDE SEQUENCE [LARGE SCALE GENOMIC DNA]</scope>
    <source>
        <strain>ATCC VR-902B / DSM 19102 / 434/Bu</strain>
    </source>
</reference>
<name>LPXD_CHLT2</name>
<protein>
    <recommendedName>
        <fullName evidence="1">UDP-3-O-acylglucosamine N-acyltransferase</fullName>
        <ecNumber evidence="1">2.3.1.191</ecNumber>
    </recommendedName>
</protein>
<accession>B0B7F9</accession>
<accession>O84245</accession>
<accession>Q9S530</accession>
<proteinExistence type="inferred from homology"/>
<feature type="chain" id="PRO_1000127669" description="UDP-3-O-acylglucosamine N-acyltransferase">
    <location>
        <begin position="1"/>
        <end position="354"/>
    </location>
</feature>
<feature type="active site" description="Proton acceptor" evidence="1">
    <location>
        <position position="247"/>
    </location>
</feature>
<feature type="sequence conflict" description="In Ref. 1; AAC35947." evidence="2" ref="1">
    <original>S</original>
    <variation>C</variation>
    <location>
        <position position="2"/>
    </location>
</feature>
<feature type="sequence conflict" description="In Ref. 1; AAC35947." evidence="2" ref="1">
    <original>S</original>
    <variation>F</variation>
    <location>
        <position position="7"/>
    </location>
</feature>
<feature type="sequence conflict" description="In Ref. 1; AAC35947." evidence="2" ref="1">
    <original>G</original>
    <variation>A</variation>
    <location>
        <position position="226"/>
    </location>
</feature>
<gene>
    <name evidence="1" type="primary">lpxD</name>
    <name type="ordered locus">CTL0495</name>
</gene>
<organism>
    <name type="scientific">Chlamydia trachomatis serovar L2 (strain ATCC VR-902B / DSM 19102 / 434/Bu)</name>
    <dbReference type="NCBI Taxonomy" id="471472"/>
    <lineage>
        <taxon>Bacteria</taxon>
        <taxon>Pseudomonadati</taxon>
        <taxon>Chlamydiota</taxon>
        <taxon>Chlamydiia</taxon>
        <taxon>Chlamydiales</taxon>
        <taxon>Chlamydiaceae</taxon>
        <taxon>Chlamydia/Chlamydophila group</taxon>
        <taxon>Chlamydia</taxon>
    </lineage>
</organism>
<evidence type="ECO:0000255" key="1">
    <source>
        <dbReference type="HAMAP-Rule" id="MF_00523"/>
    </source>
</evidence>
<evidence type="ECO:0000305" key="2"/>
<dbReference type="EC" id="2.3.1.191" evidence="1"/>
<dbReference type="EMBL" id="AF077009">
    <property type="protein sequence ID" value="AAC35947.1"/>
    <property type="molecule type" value="Genomic_DNA"/>
</dbReference>
<dbReference type="EMBL" id="AM884176">
    <property type="protein sequence ID" value="CAP03935.1"/>
    <property type="molecule type" value="Genomic_DNA"/>
</dbReference>
<dbReference type="RefSeq" id="WP_009873666.1">
    <property type="nucleotide sequence ID" value="NC_010287.1"/>
</dbReference>
<dbReference type="RefSeq" id="YP_001654572.1">
    <property type="nucleotide sequence ID" value="NC_010287.1"/>
</dbReference>
<dbReference type="SMR" id="B0B7F9"/>
<dbReference type="KEGG" id="ctb:CTL0495"/>
<dbReference type="PATRIC" id="fig|471472.4.peg.533"/>
<dbReference type="HOGENOM" id="CLU_049865_0_0_0"/>
<dbReference type="UniPathway" id="UPA00973"/>
<dbReference type="Proteomes" id="UP001154402">
    <property type="component" value="Chromosome"/>
</dbReference>
<dbReference type="GO" id="GO:0016020">
    <property type="term" value="C:membrane"/>
    <property type="evidence" value="ECO:0007669"/>
    <property type="project" value="GOC"/>
</dbReference>
<dbReference type="GO" id="GO:0016410">
    <property type="term" value="F:N-acyltransferase activity"/>
    <property type="evidence" value="ECO:0007669"/>
    <property type="project" value="InterPro"/>
</dbReference>
<dbReference type="GO" id="GO:0009245">
    <property type="term" value="P:lipid A biosynthetic process"/>
    <property type="evidence" value="ECO:0007669"/>
    <property type="project" value="UniProtKB-UniRule"/>
</dbReference>
<dbReference type="CDD" id="cd03352">
    <property type="entry name" value="LbH_LpxD"/>
    <property type="match status" value="1"/>
</dbReference>
<dbReference type="Gene3D" id="1.20.5.170">
    <property type="match status" value="1"/>
</dbReference>
<dbReference type="Gene3D" id="2.160.10.10">
    <property type="entry name" value="Hexapeptide repeat proteins"/>
    <property type="match status" value="1"/>
</dbReference>
<dbReference type="Gene3D" id="3.40.1390.10">
    <property type="entry name" value="MurE/MurF, N-terminal domain"/>
    <property type="match status" value="1"/>
</dbReference>
<dbReference type="HAMAP" id="MF_00523">
    <property type="entry name" value="LpxD"/>
    <property type="match status" value="1"/>
</dbReference>
<dbReference type="InterPro" id="IPR001451">
    <property type="entry name" value="Hexapep"/>
</dbReference>
<dbReference type="InterPro" id="IPR007691">
    <property type="entry name" value="LpxD"/>
</dbReference>
<dbReference type="InterPro" id="IPR011004">
    <property type="entry name" value="Trimer_LpxA-like_sf"/>
</dbReference>
<dbReference type="InterPro" id="IPR020573">
    <property type="entry name" value="UDP_GlcNAc_AcTrfase_non-rep"/>
</dbReference>
<dbReference type="NCBIfam" id="TIGR01853">
    <property type="entry name" value="lipid_A_lpxD"/>
    <property type="match status" value="1"/>
</dbReference>
<dbReference type="NCBIfam" id="NF002060">
    <property type="entry name" value="PRK00892.1"/>
    <property type="match status" value="1"/>
</dbReference>
<dbReference type="PANTHER" id="PTHR43378">
    <property type="entry name" value="UDP-3-O-ACYLGLUCOSAMINE N-ACYLTRANSFERASE"/>
    <property type="match status" value="1"/>
</dbReference>
<dbReference type="PANTHER" id="PTHR43378:SF2">
    <property type="entry name" value="UDP-3-O-ACYLGLUCOSAMINE N-ACYLTRANSFERASE 1, MITOCHONDRIAL-RELATED"/>
    <property type="match status" value="1"/>
</dbReference>
<dbReference type="Pfam" id="PF00132">
    <property type="entry name" value="Hexapep"/>
    <property type="match status" value="2"/>
</dbReference>
<dbReference type="Pfam" id="PF04613">
    <property type="entry name" value="LpxD"/>
    <property type="match status" value="1"/>
</dbReference>
<dbReference type="SUPFAM" id="SSF51161">
    <property type="entry name" value="Trimeric LpxA-like enzymes"/>
    <property type="match status" value="1"/>
</dbReference>
<keyword id="KW-0012">Acyltransferase</keyword>
<keyword id="KW-0441">Lipid A biosynthesis</keyword>
<keyword id="KW-0444">Lipid biosynthesis</keyword>
<keyword id="KW-0443">Lipid metabolism</keyword>
<keyword id="KW-0677">Repeat</keyword>
<keyword id="KW-0808">Transferase</keyword>
<sequence>MSQSTYSLEQLADFLKVEFQGNGATLLSGVEEIEEAKTAHITFLDNEKYAKHLKSSEAGAIIISRTQFQKYRDLNKNFLITSESPSLVFQKCLELFITPVDSGFPGIHPTAVIHPTAIIEDHVCIEPYAVVCQHAHVGSACHIGSGSVIGAYSTVGQHSYIHPRVVIRERVSIGKRVIIQPGAVIGSCGFGYVTSAFGQHKHLKHLGKVIIEDDVEIGANTTIDRGRFKHSVVREGSKIDNLVQIAHQVEVGQHSMIVAQAGIAGSTKIGNHVIIGGQAGITGHICIADHVIMMAQTGVTKSITSPGIYGGAPARPYQEIHRQVAKVRNLPRLEERIAALEKLVQKLEALSEQH</sequence>